<organism>
    <name type="scientific">Nicotiana tabacum</name>
    <name type="common">Common tobacco</name>
    <dbReference type="NCBI Taxonomy" id="4097"/>
    <lineage>
        <taxon>Eukaryota</taxon>
        <taxon>Viridiplantae</taxon>
        <taxon>Streptophyta</taxon>
        <taxon>Embryophyta</taxon>
        <taxon>Tracheophyta</taxon>
        <taxon>Spermatophyta</taxon>
        <taxon>Magnoliopsida</taxon>
        <taxon>eudicotyledons</taxon>
        <taxon>Gunneridae</taxon>
        <taxon>Pentapetalae</taxon>
        <taxon>asterids</taxon>
        <taxon>lamiids</taxon>
        <taxon>Solanales</taxon>
        <taxon>Solanaceae</taxon>
        <taxon>Nicotianoideae</taxon>
        <taxon>Nicotianeae</taxon>
        <taxon>Nicotiana</taxon>
    </lineage>
</organism>
<accession>P06355</accession>
<geneLocation type="chloroplast"/>
<protein>
    <recommendedName>
        <fullName evidence="1">Small ribosomal subunit protein uS2c</fullName>
    </recommendedName>
    <alternativeName>
        <fullName>30S ribosomal protein S2, chloroplastic</fullName>
    </alternativeName>
</protein>
<reference key="1">
    <citation type="journal article" date="1986" name="EMBO J.">
        <title>The complete nucleotide sequence of the tobacco chloroplast genome: its gene organization and expression.</title>
        <authorList>
            <person name="Shinozaki K."/>
            <person name="Ohme M."/>
            <person name="Tanaka M."/>
            <person name="Wakasugi T."/>
            <person name="Hayashida N."/>
            <person name="Matsubayashi T."/>
            <person name="Zaita N."/>
            <person name="Chunwongse J."/>
            <person name="Obokata J."/>
            <person name="Yamaguchi-Shinozaki K."/>
            <person name="Ohto C."/>
            <person name="Torazawa K."/>
            <person name="Meng B.-Y."/>
            <person name="Sugita M."/>
            <person name="Deno H."/>
            <person name="Kamogashira T."/>
            <person name="Yamada K."/>
            <person name="Kusuda J."/>
            <person name="Takaiwa F."/>
            <person name="Kato A."/>
            <person name="Tohdoh N."/>
            <person name="Shimada H."/>
            <person name="Sugiura M."/>
        </authorList>
    </citation>
    <scope>NUCLEOTIDE SEQUENCE [LARGE SCALE GENOMIC DNA]</scope>
    <source>
        <strain>cv. Bright Yellow 4</strain>
    </source>
</reference>
<keyword id="KW-0150">Chloroplast</keyword>
<keyword id="KW-0934">Plastid</keyword>
<keyword id="KW-1185">Reference proteome</keyword>
<keyword id="KW-0687">Ribonucleoprotein</keyword>
<keyword id="KW-0689">Ribosomal protein</keyword>
<comment type="subcellular location">
    <subcellularLocation>
        <location>Plastid</location>
        <location>Chloroplast</location>
    </subcellularLocation>
</comment>
<comment type="similarity">
    <text evidence="1">Belongs to the universal ribosomal protein uS2 family.</text>
</comment>
<proteinExistence type="inferred from homology"/>
<evidence type="ECO:0000305" key="1"/>
<dbReference type="EMBL" id="Z00044">
    <property type="protein sequence ID" value="CAA77345.1"/>
    <property type="molecule type" value="Genomic_DNA"/>
</dbReference>
<dbReference type="PIR" id="A02698">
    <property type="entry name" value="R3NT2"/>
</dbReference>
<dbReference type="RefSeq" id="NP_054485.1">
    <property type="nucleotide sequence ID" value="NC_001879.2"/>
</dbReference>
<dbReference type="SMR" id="P06355"/>
<dbReference type="GeneID" id="800455"/>
<dbReference type="KEGG" id="nta:800455"/>
<dbReference type="OMA" id="PYIFMEK"/>
<dbReference type="OrthoDB" id="565471at2759"/>
<dbReference type="Proteomes" id="UP000084051">
    <property type="component" value="Unplaced"/>
</dbReference>
<dbReference type="GO" id="GO:0009507">
    <property type="term" value="C:chloroplast"/>
    <property type="evidence" value="ECO:0007669"/>
    <property type="project" value="UniProtKB-SubCell"/>
</dbReference>
<dbReference type="GO" id="GO:0015935">
    <property type="term" value="C:small ribosomal subunit"/>
    <property type="evidence" value="ECO:0007669"/>
    <property type="project" value="InterPro"/>
</dbReference>
<dbReference type="GO" id="GO:0003735">
    <property type="term" value="F:structural constituent of ribosome"/>
    <property type="evidence" value="ECO:0007669"/>
    <property type="project" value="InterPro"/>
</dbReference>
<dbReference type="GO" id="GO:0006412">
    <property type="term" value="P:translation"/>
    <property type="evidence" value="ECO:0007669"/>
    <property type="project" value="UniProtKB-UniRule"/>
</dbReference>
<dbReference type="CDD" id="cd01425">
    <property type="entry name" value="RPS2"/>
    <property type="match status" value="1"/>
</dbReference>
<dbReference type="FunFam" id="3.40.50.10490:FF:000101">
    <property type="match status" value="1"/>
</dbReference>
<dbReference type="FunFam" id="1.10.287.610:FF:000001">
    <property type="entry name" value="30S ribosomal protein S2"/>
    <property type="match status" value="1"/>
</dbReference>
<dbReference type="FunFam" id="3.40.50.10490:FF:000008">
    <property type="entry name" value="30S ribosomal protein S2, chloroplastic"/>
    <property type="match status" value="1"/>
</dbReference>
<dbReference type="Gene3D" id="3.40.50.10490">
    <property type="entry name" value="Glucose-6-phosphate isomerase like protein, domain 1"/>
    <property type="match status" value="1"/>
</dbReference>
<dbReference type="Gene3D" id="1.10.287.610">
    <property type="entry name" value="Helix hairpin bin"/>
    <property type="match status" value="1"/>
</dbReference>
<dbReference type="HAMAP" id="MF_00291_B">
    <property type="entry name" value="Ribosomal_uS2_B"/>
    <property type="match status" value="1"/>
</dbReference>
<dbReference type="InterPro" id="IPR001865">
    <property type="entry name" value="Ribosomal_uS2"/>
</dbReference>
<dbReference type="InterPro" id="IPR005706">
    <property type="entry name" value="Ribosomal_uS2_bac/mit/plastid"/>
</dbReference>
<dbReference type="InterPro" id="IPR018130">
    <property type="entry name" value="Ribosomal_uS2_CS"/>
</dbReference>
<dbReference type="InterPro" id="IPR023591">
    <property type="entry name" value="Ribosomal_uS2_flav_dom_sf"/>
</dbReference>
<dbReference type="NCBIfam" id="TIGR01011">
    <property type="entry name" value="rpsB_bact"/>
    <property type="match status" value="1"/>
</dbReference>
<dbReference type="PANTHER" id="PTHR12534">
    <property type="entry name" value="30S RIBOSOMAL PROTEIN S2 PROKARYOTIC AND ORGANELLAR"/>
    <property type="match status" value="1"/>
</dbReference>
<dbReference type="PANTHER" id="PTHR12534:SF0">
    <property type="entry name" value="SMALL RIBOSOMAL SUBUNIT PROTEIN US2M"/>
    <property type="match status" value="1"/>
</dbReference>
<dbReference type="Pfam" id="PF00318">
    <property type="entry name" value="Ribosomal_S2"/>
    <property type="match status" value="1"/>
</dbReference>
<dbReference type="PRINTS" id="PR00395">
    <property type="entry name" value="RIBOSOMALS2"/>
</dbReference>
<dbReference type="SUPFAM" id="SSF52313">
    <property type="entry name" value="Ribosomal protein S2"/>
    <property type="match status" value="1"/>
</dbReference>
<dbReference type="PROSITE" id="PS00962">
    <property type="entry name" value="RIBOSOMAL_S2_1"/>
    <property type="match status" value="1"/>
</dbReference>
<dbReference type="PROSITE" id="PS00963">
    <property type="entry name" value="RIBOSOMAL_S2_2"/>
    <property type="match status" value="1"/>
</dbReference>
<feature type="chain" id="PRO_0000134314" description="Small ribosomal subunit protein uS2c">
    <location>
        <begin position="1"/>
        <end position="236"/>
    </location>
</feature>
<name>RR2_TOBAC</name>
<gene>
    <name type="primary">rps2</name>
</gene>
<sequence length="236" mass="26943">MTRRYWNINLEEMMEAGVHFGHGTRKWNPKMAPYISAKRKGIHITNLTRTARFLSEACDLVFDAASRGKQFLIVGTKNKAADSVEWAAIRARCHYVNKKWLGGMLTNWSTTETRLHKFRDLRMEQKTGRLNRLPKRDAAMLKRQLSRLQTYLGGIKYMTGVPDIVIIVDQHEEYTALRECITLGIPTICLTDTNCDPDLADISIPANDDAISSIRLILNKLVFAICEGRSSYIRNP</sequence>